<proteinExistence type="evidence at protein level"/>
<organism>
    <name type="scientific">Aspergillus parasiticus (strain ATCC 56775 / NRRL 5862 / SRRC 143 / SU-1)</name>
    <dbReference type="NCBI Taxonomy" id="1403190"/>
    <lineage>
        <taxon>Eukaryota</taxon>
        <taxon>Fungi</taxon>
        <taxon>Dikarya</taxon>
        <taxon>Ascomycota</taxon>
        <taxon>Pezizomycotina</taxon>
        <taxon>Eurotiomycetes</taxon>
        <taxon>Eurotiomycetidae</taxon>
        <taxon>Eurotiales</taxon>
        <taxon>Aspergillaceae</taxon>
        <taxon>Aspergillus</taxon>
        <taxon>Aspergillus subgen. Circumdati</taxon>
    </lineage>
</organism>
<name>AFLM_ASPPU</name>
<keyword id="KW-0963">Cytoplasm</keyword>
<keyword id="KW-0521">NADP</keyword>
<keyword id="KW-0560">Oxidoreductase</keyword>
<keyword id="KW-1185">Reference proteome</keyword>
<evidence type="ECO:0000250" key="1">
    <source>
        <dbReference type="UniProtKB" id="L0E2Z4"/>
    </source>
</evidence>
<evidence type="ECO:0000250" key="2">
    <source>
        <dbReference type="UniProtKB" id="O93868"/>
    </source>
</evidence>
<evidence type="ECO:0000255" key="3">
    <source>
        <dbReference type="PROSITE-ProRule" id="PRU10001"/>
    </source>
</evidence>
<evidence type="ECO:0000269" key="4">
    <source>
    </source>
</evidence>
<evidence type="ECO:0000269" key="5">
    <source>
    </source>
</evidence>
<evidence type="ECO:0000269" key="6">
    <source>
    </source>
</evidence>
<evidence type="ECO:0000269" key="7">
    <source>
    </source>
</evidence>
<evidence type="ECO:0000269" key="8">
    <source>
    </source>
</evidence>
<evidence type="ECO:0000269" key="9">
    <source>
    </source>
</evidence>
<evidence type="ECO:0000269" key="10">
    <source>
    </source>
</evidence>
<evidence type="ECO:0000269" key="11">
    <source>
    </source>
</evidence>
<evidence type="ECO:0000303" key="12">
    <source>
    </source>
</evidence>
<evidence type="ECO:0000303" key="13">
    <source>
    </source>
</evidence>
<evidence type="ECO:0000305" key="14"/>
<evidence type="ECO:0000305" key="15">
    <source>
    </source>
</evidence>
<evidence type="ECO:0000305" key="16">
    <source>
    </source>
</evidence>
<evidence type="ECO:0000305" key="17">
    <source>
    </source>
</evidence>
<protein>
    <recommendedName>
        <fullName evidence="15">Versicolorin reductase 1</fullName>
        <shortName evidence="12">VER-1</shortName>
        <ecNumber evidence="11">1.3.1.-</ecNumber>
    </recommendedName>
    <alternativeName>
        <fullName evidence="13">Aflatoxin biosynthesis protein M</fullName>
    </alternativeName>
</protein>
<accession>P50161</accession>
<accession>A0A0F0HZ46</accession>
<accession>Q6UEG3</accession>
<reference key="1">
    <citation type="journal article" date="1992" name="Appl. Environ. Microbiol.">
        <title>Isolation and characterization of a gene from Aspergillus parasiticus associated with the conversion of versicolorin A to sterigmatocystin in aflatoxin biosynthesis.</title>
        <authorList>
            <person name="Skory C.D."/>
            <person name="Chang P.K."/>
            <person name="Cary J."/>
            <person name="Linz J.E."/>
        </authorList>
    </citation>
    <scope>NUCLEOTIDE SEQUENCE [GENOMIC DNA]</scope>
    <scope>FUNCTION</scope>
    <source>
        <strain>ATCC 56775 / NRRL 5862 / SRRC 143 / SU-1</strain>
    </source>
</reference>
<reference key="2">
    <citation type="submission" date="1996-09" db="EMBL/GenBank/DDBJ databases">
        <authorList>
            <person name="Linz J.E."/>
        </authorList>
    </citation>
    <scope>SEQUENCE REVISION</scope>
    <source>
        <strain>ATCC 56775 / NRRL 5862 / SRRC 143 / SU-1</strain>
    </source>
</reference>
<reference key="3">
    <citation type="journal article" date="2004" name="FEBS Lett.">
        <title>Completed sequence of aflatoxin pathway gene cluster in Aspergillus parasiticus.</title>
        <authorList>
            <person name="Yu J."/>
            <person name="Bhatnagar D."/>
            <person name="Cleveland T.E."/>
        </authorList>
    </citation>
    <scope>NUCLEOTIDE SEQUENCE [GENOMIC DNA]</scope>
    <scope>FUNCTION</scope>
    <scope>PATHWAY</scope>
    <source>
        <strain>ATCC 56775 / NRRL 5862 / SRRC 143 / SU-1</strain>
    </source>
</reference>
<reference key="4">
    <citation type="submission" date="2015-02" db="EMBL/GenBank/DDBJ databases">
        <title>Draft genome sequence of Aspergillus parasiticus SU-1.</title>
        <authorList>
            <person name="Yu J."/>
            <person name="Fedorova N."/>
            <person name="Yin Y."/>
            <person name="Losada L."/>
            <person name="Zafar N."/>
            <person name="Taujale R."/>
            <person name="Ehrlich K.C."/>
            <person name="Bhatnagar D."/>
            <person name="Cleveland T.E."/>
            <person name="Bennett J.W."/>
            <person name="Nierman W.C."/>
        </authorList>
    </citation>
    <scope>NUCLEOTIDE SEQUENCE [LARGE SCALE GENOMIC DNA]</scope>
    <source>
        <strain>ATCC 56775 / NRRL 5862 / SRRC 143 / SU-1</strain>
    </source>
</reference>
<reference key="5">
    <citation type="journal article" date="2004" name="Appl. Environ. Microbiol.">
        <title>Clustered pathway genes in aflatoxin biosynthesis.</title>
        <authorList>
            <person name="Yu J."/>
            <person name="Chang P.K."/>
            <person name="Ehrlich K.C."/>
            <person name="Cary J.W."/>
            <person name="Bhatnagar D."/>
            <person name="Cleveland T.E."/>
            <person name="Payne G.A."/>
            <person name="Linz J.E."/>
            <person name="Woloshuk C.P."/>
            <person name="Bennett J.W."/>
        </authorList>
    </citation>
    <scope>FUNCTION</scope>
    <scope>PATHWAY</scope>
    <scope>NOMENCLATURE</scope>
</reference>
<reference key="6">
    <citation type="journal article" date="2004" name="Arch. Microbiol.">
        <title>Subcellular localization of aflatoxin biosynthetic enzymes Nor-1, Ver-1, and OmtA in time-dependent fractionated colonies of Aspergillus parasiticus.</title>
        <authorList>
            <person name="Lee L.W."/>
            <person name="Chiou C.H."/>
            <person name="Klomparens K.L."/>
            <person name="Cary J.W."/>
            <person name="Linz J.E."/>
        </authorList>
    </citation>
    <scope>SUBCELLULAR LOCATION</scope>
</reference>
<reference key="7">
    <citation type="journal article" date="2004" name="J. Biol. Chem.">
        <title>A novel cAMP-response element, CRE1, modulates expression of nor-1 in Aspergillus parasiticus.</title>
        <authorList>
            <person name="Roze L.V."/>
            <person name="Miller M.J."/>
            <person name="Rarick M."/>
            <person name="Mahanti N."/>
            <person name="Linz J.E."/>
        </authorList>
    </citation>
    <scope>INDUCTION</scope>
</reference>
<reference key="8">
    <citation type="journal article" date="2012" name="Iran. J. Public Health">
        <title>Effect of curcumin on Aspergillus parasiticus growth and expression of major genes involved in the early and late stages of aflatoxin biosynthesis.</title>
        <authorList>
            <person name="Jahanshiri Z."/>
            <person name="Shams-Ghahfarokhi M."/>
            <person name="Allameh A."/>
            <person name="Razzaghi-Abyaneh M."/>
        </authorList>
    </citation>
    <scope>INDUCTION</scope>
</reference>
<reference key="9">
    <citation type="journal article" date="2013" name="Braz. J. Microbiol.">
        <title>The potential effects of Zataria multiflora Boiss essential oil on growth, aflatoxin production and transcription of aflatoxin biosynthesis pathway genes of toxigenic Aspergillus parasiticus.</title>
        <authorList>
            <person name="Yahyaraeyat R."/>
            <person name="Khosravi A.R."/>
            <person name="Shahbazzadeh D."/>
            <person name="Khalaj V."/>
        </authorList>
    </citation>
    <scope>INDUCTION</scope>
</reference>
<reference key="10">
    <citation type="journal article" date="2013" name="MicrobiologyOpen">
        <title>Evidence that a transcription factor regulatory network coordinates oxidative stress response and secondary metabolism in aspergilli.</title>
        <authorList>
            <person name="Hong S.Y."/>
            <person name="Roze L.V."/>
            <person name="Wee J."/>
            <person name="Linz J.E."/>
        </authorList>
    </citation>
    <scope>INDUCTION</scope>
</reference>
<reference key="11">
    <citation type="journal article" date="2015" name="J. Am. Chem. Soc.">
        <title>New insights into the conversion of versicolorin A in the biosynthesis of aflatoxin B1.</title>
        <authorList>
            <person name="Conradt D."/>
            <person name="Schaetzle M.A."/>
            <person name="Haas J."/>
            <person name="Townsend C.A."/>
            <person name="Mueller M."/>
        </authorList>
    </citation>
    <scope>FUNCTION</scope>
    <scope>CATALYTIC ACTIVITY</scope>
    <scope>PATHWAY</scope>
</reference>
<comment type="function">
    <text evidence="4 11 16 17">Cytochrome P450 monooxygenase; part of the gene cluster that mediates the biosynthesis of aflatoxins, a group of polyketide-derived furanocoumarins, and part of the most toxic and carcinogenic compounds among the known mycotoxins (PubMed:1339261, PubMed:15006741, PubMed:15094053, PubMed:26266881). The four major aflatoxins produced by A.parasiticus are aflatoxin B1 (AFB1), aflatoxin B2 (AFB2), aflatoxin G1 (AFG1) and aflatoxin G2 (AFG2) (PubMed:15006741). Within the aflatoxin pathway, with the cytochrome P450 monooxygenase aflN, the versicolorin reductase aflM, is involved in conversion of VERA to demethylsterigmatocystin (DMST) (PubMed:1339261, PubMed:15006741, PubMed:26266881). The biosynthesis of aflatoxins begins with the norsolorinic acid synthase aflC that combines a hexanoyl starter unit produced by the fatty acid synthase aflA/aflB and 7 malonyl-CoA extender units to synthesize the precursor NOR. The second step is the conversion of NOR to averantin and requires the norsolorinic acid ketoreductase aflD, which catalyzes the dehydration of norsolorinic acid to form (1'S)-averantin. The norsolorinic acid reductases aflE and aflF may also play a role in the conversion of NOR to AVN. The cytochrome P450 monooxygenase aflG then catalyzes the hydroxylation of AVN to 5'hydroxyaverantin (HAVN). The next step is performed by the 5'-hydroxyaverantin dehydrogenase aflH that transforms HAVN to 5'-oxoaverantin (OAVN) which is further converted to averufin (AVF) by aflK that plays a dual role in the pathway, as a 5'-oxoaverantin cyclase that mediates conversion of 5'-oxoaverantin, as well as a versicolorin B synthase in a later step in the pathway. The averufin oxidase aflI catalyzes the conversion of AVF to versiconal hemiacetal acetate (VHA). VHA is then the substrate for the versiconal hemiacetal acetate esterase aflJ to yield versiconal (VAL). Versicolorin B synthase aflK then converts VAL to versicolorin B (VERB) by closing the bisfuran ring of aflatoxin which is required for DNA-binding, thus giving to aflatoxin its activity as a mutagen. Then, the activity of the versicolorin B desaturase aflL leads to versicolorin A (VERA). A branch point starts from VERB since it can also be converted to dihydrodemethylsterigmatocystin (DMDHST), probably also by aflL, VERA being a precursor for aflatoxins B1 and G1, and DMDHST for aflatoxins B2 and G2. Next, the versicolorin reductase aflM and the cytochrome P450 monooxygenase aflN are involved in conversion of VERA to demethylsterigmatocystin (DMST). AflX and aflY seem also involved in this step, through probable aflX-mediated epoxide ring-opening step following versicolorin A oxidation and aflY-mediated Baeyer-Villiger oxidation required for the formation of the xanthone ring. The methyltransferase aflO then leads to the modification of DMST to sterigmatocystin (ST), and of DMDHST to dihydrosterigmatocystin (DHST). Both ST and DHST are then substrates of the O-methyltransferase aflP to yield O-methylsterigmatocystin (OMST) and dihydro-O-methylsterigmatocystin (DHOMST), respectively. Finally OMST is converted to aflatoxins B1 and G1, and DHOMST to aflatoxins B2 and G2, via the action of several enzymes including O-methylsterigmatocystin oxidoreductase aflQ, the cytochrome P450 monooxygenase aflU, but also the NADH-dependent flavin oxidoreductase nadA which is specifically required for the synthesis of AFG1 (PubMed:15006741).</text>
</comment>
<comment type="catalytic activity">
    <reaction evidence="11">
        <text>(4S,8R)-2,13,16,20-tetrahydroxy-7,9-dioxapentacyclo[10.8.0.0(3,10).0(4,8).0(14,19)]icosa-1(12),2,5,10,13,16,19-heptaen-18-one + NADPH + H(+) = (4S,8R,16R)-2,13,16,20-tetrahydroxy-7,9-dioxapentacyclo[10.8.0.0(3,10).0(4,8).0(14,19)]icosa-1(12),2,5,10,13,19-hexaen-18-one + NADP(+)</text>
        <dbReference type="Rhea" id="RHEA:64296"/>
        <dbReference type="ChEBI" id="CHEBI:15378"/>
        <dbReference type="ChEBI" id="CHEBI:57783"/>
        <dbReference type="ChEBI" id="CHEBI:58349"/>
        <dbReference type="ChEBI" id="CHEBI:150859"/>
        <dbReference type="ChEBI" id="CHEBI:150860"/>
    </reaction>
    <physiologicalReaction direction="left-to-right" evidence="11">
        <dbReference type="Rhea" id="RHEA:64297"/>
    </physiologicalReaction>
</comment>
<comment type="pathway">
    <text evidence="7 16">Mycotoxin biosynthesis; aflatoxin biosynthesis.</text>
</comment>
<comment type="subcellular location">
    <subcellularLocation>
        <location evidence="5">Cytoplasm</location>
        <location evidence="5">Cytosol</location>
    </subcellularLocation>
</comment>
<comment type="induction">
    <text evidence="6 8 9 10">Expression is stimulated by gluscoe (PubMed:15054098). Expression is regulated by the atfB, srrA, AP-1, and msnA transcription regulators (PubMed:23281343). These factors bind respectively to the conserved motifs CRE1 (5'-TGACATAA-3'), SRRA (5'-T/GNT/CAAG CCNNG/AA/GC/ANT/C-3'), AP-1 (5'-TGAGTAC-3') and STRE (5'-CCCCT-3'), present in the promoter of aflB (PubMed:23281343). Zataria multiflora essential oil reduces gene expression (PubMed:24294264). Expression is repressed by curcumin (PubMed:23113196).</text>
</comment>
<comment type="similarity">
    <text evidence="14">Belongs to the short-chain dehydrogenases/reductases (SDR) family.</text>
</comment>
<sequence length="262" mass="27927">MSDNHRLDGKVALVTGAGRGIGAAIAVALGERGAKVVVNYAHSREAAEKVVEQIKANGTDAIAIQADVGDPEATAKLMAETVRHFGYLDIVSSNAGIVSFGHLKDVTPEEFDRVFRVNTRGQFFVAREAYRHMREGGRIILTSSNTACVKGVPKHAVYSGSKGAIDTFVRCMAIDCGDKKITVNAVAPGAIKTDMFLAVSREYIPNGETFTDEQVDECAAWLSPLNRVGLPVDVARVVSFLASDTAEWVSGKIIGVDGGAFR</sequence>
<gene>
    <name evidence="13" type="primary">aflM</name>
    <name evidence="12" type="synonym">ver-1</name>
    <name type="ORF">P875_00052984</name>
</gene>
<feature type="chain" id="PRO_0000054807" description="Versicolorin reductase 1">
    <location>
        <begin position="1"/>
        <end position="262"/>
    </location>
</feature>
<feature type="active site" description="Proton donor" evidence="2">
    <location>
        <position position="143"/>
    </location>
</feature>
<feature type="active site" description="Proton donor" evidence="2">
    <location>
        <position position="144"/>
    </location>
</feature>
<feature type="active site" description="Proton acceptor" evidence="3">
    <location>
        <position position="158"/>
    </location>
</feature>
<feature type="active site" description="Lowers pKa of active site Tyr" evidence="2">
    <location>
        <position position="162"/>
    </location>
</feature>
<feature type="binding site" evidence="1">
    <location>
        <position position="21"/>
    </location>
    <ligand>
        <name>NADP(+)</name>
        <dbReference type="ChEBI" id="CHEBI:58349"/>
    </ligand>
</feature>
<feature type="binding site" evidence="1">
    <location>
        <position position="67"/>
    </location>
    <ligand>
        <name>NADP(+)</name>
        <dbReference type="ChEBI" id="CHEBI:58349"/>
    </ligand>
</feature>
<feature type="binding site" evidence="2">
    <location>
        <position position="94"/>
    </location>
    <ligand>
        <name>NADP(+)</name>
        <dbReference type="ChEBI" id="CHEBI:58349"/>
    </ligand>
</feature>
<feature type="binding site" evidence="1">
    <location>
        <position position="127"/>
    </location>
    <ligand>
        <name>NADP(+)</name>
        <dbReference type="ChEBI" id="CHEBI:58349"/>
    </ligand>
</feature>
<feature type="binding site" evidence="2">
    <location>
        <position position="158"/>
    </location>
    <ligand>
        <name>NADP(+)</name>
        <dbReference type="ChEBI" id="CHEBI:58349"/>
    </ligand>
</feature>
<feature type="binding site" evidence="2">
    <location>
        <position position="162"/>
    </location>
    <ligand>
        <name>NADP(+)</name>
        <dbReference type="ChEBI" id="CHEBI:58349"/>
    </ligand>
</feature>
<feature type="binding site" evidence="2">
    <location>
        <position position="191"/>
    </location>
    <ligand>
        <name>NADP(+)</name>
        <dbReference type="ChEBI" id="CHEBI:58349"/>
    </ligand>
</feature>
<feature type="binding site" evidence="1">
    <location>
        <position position="193"/>
    </location>
    <ligand>
        <name>NADP(+)</name>
        <dbReference type="ChEBI" id="CHEBI:58349"/>
    </ligand>
</feature>
<dbReference type="EC" id="1.3.1.-" evidence="11"/>
<dbReference type="EMBL" id="M91369">
    <property type="protein sequence ID" value="AAB42156.1"/>
    <property type="molecule type" value="Genomic_DNA"/>
</dbReference>
<dbReference type="EMBL" id="AY371490">
    <property type="protein sequence ID" value="AAS66014.1"/>
    <property type="molecule type" value="Genomic_DNA"/>
</dbReference>
<dbReference type="EMBL" id="JZEE01000729">
    <property type="protein sequence ID" value="KJK60755.1"/>
    <property type="molecule type" value="Genomic_DNA"/>
</dbReference>
<dbReference type="SMR" id="P50161"/>
<dbReference type="STRING" id="1403190.P50161"/>
<dbReference type="OrthoDB" id="47007at2759"/>
<dbReference type="BioCyc" id="MetaCyc:MONOMER-21286"/>
<dbReference type="UniPathway" id="UPA00287"/>
<dbReference type="Proteomes" id="UP000033540">
    <property type="component" value="Unassembled WGS sequence"/>
</dbReference>
<dbReference type="GO" id="GO:0005829">
    <property type="term" value="C:cytosol"/>
    <property type="evidence" value="ECO:0000314"/>
    <property type="project" value="UniProt"/>
</dbReference>
<dbReference type="GO" id="GO:0042469">
    <property type="term" value="F:versicolorin reductase activity"/>
    <property type="evidence" value="ECO:0000314"/>
    <property type="project" value="UniProt"/>
</dbReference>
<dbReference type="GO" id="GO:0045122">
    <property type="term" value="P:aflatoxin biosynthetic process"/>
    <property type="evidence" value="ECO:0000314"/>
    <property type="project" value="GO_Central"/>
</dbReference>
<dbReference type="FunFam" id="3.40.50.720:FF:000084">
    <property type="entry name" value="Short-chain dehydrogenase reductase"/>
    <property type="match status" value="1"/>
</dbReference>
<dbReference type="Gene3D" id="3.40.50.720">
    <property type="entry name" value="NAD(P)-binding Rossmann-like Domain"/>
    <property type="match status" value="1"/>
</dbReference>
<dbReference type="InterPro" id="IPR036291">
    <property type="entry name" value="NAD(P)-bd_dom_sf"/>
</dbReference>
<dbReference type="InterPro" id="IPR020904">
    <property type="entry name" value="Sc_DH/Rdtase_CS"/>
</dbReference>
<dbReference type="InterPro" id="IPR002347">
    <property type="entry name" value="SDR_fam"/>
</dbReference>
<dbReference type="NCBIfam" id="NF005559">
    <property type="entry name" value="PRK07231.1"/>
    <property type="match status" value="1"/>
</dbReference>
<dbReference type="PANTHER" id="PTHR48107">
    <property type="entry name" value="NADPH-DEPENDENT ALDEHYDE REDUCTASE-LIKE PROTEIN, CHLOROPLASTIC-RELATED"/>
    <property type="match status" value="1"/>
</dbReference>
<dbReference type="PANTHER" id="PTHR48107:SF7">
    <property type="entry name" value="RE15974P"/>
    <property type="match status" value="1"/>
</dbReference>
<dbReference type="Pfam" id="PF13561">
    <property type="entry name" value="adh_short_C2"/>
    <property type="match status" value="1"/>
</dbReference>
<dbReference type="PRINTS" id="PR00081">
    <property type="entry name" value="GDHRDH"/>
</dbReference>
<dbReference type="PRINTS" id="PR00080">
    <property type="entry name" value="SDRFAMILY"/>
</dbReference>
<dbReference type="SMART" id="SM00822">
    <property type="entry name" value="PKS_KR"/>
    <property type="match status" value="1"/>
</dbReference>
<dbReference type="SUPFAM" id="SSF51735">
    <property type="entry name" value="NAD(P)-binding Rossmann-fold domains"/>
    <property type="match status" value="1"/>
</dbReference>
<dbReference type="PROSITE" id="PS00061">
    <property type="entry name" value="ADH_SHORT"/>
    <property type="match status" value="1"/>
</dbReference>